<dbReference type="EMBL" id="CP000478">
    <property type="protein sequence ID" value="ABK18261.1"/>
    <property type="molecule type" value="Genomic_DNA"/>
</dbReference>
<dbReference type="RefSeq" id="WP_011699429.1">
    <property type="nucleotide sequence ID" value="NC_008554.1"/>
</dbReference>
<dbReference type="SMR" id="A0LLF9"/>
<dbReference type="FunCoup" id="A0LLF9">
    <property type="interactions" value="417"/>
</dbReference>
<dbReference type="STRING" id="335543.Sfum_2583"/>
<dbReference type="KEGG" id="sfu:Sfum_2583"/>
<dbReference type="eggNOG" id="COG0224">
    <property type="taxonomic scope" value="Bacteria"/>
</dbReference>
<dbReference type="HOGENOM" id="CLU_050669_0_1_7"/>
<dbReference type="InParanoid" id="A0LLF9"/>
<dbReference type="OrthoDB" id="9812769at2"/>
<dbReference type="Proteomes" id="UP000001784">
    <property type="component" value="Chromosome"/>
</dbReference>
<dbReference type="GO" id="GO:0005886">
    <property type="term" value="C:plasma membrane"/>
    <property type="evidence" value="ECO:0007669"/>
    <property type="project" value="UniProtKB-SubCell"/>
</dbReference>
<dbReference type="GO" id="GO:0045259">
    <property type="term" value="C:proton-transporting ATP synthase complex"/>
    <property type="evidence" value="ECO:0007669"/>
    <property type="project" value="UniProtKB-KW"/>
</dbReference>
<dbReference type="GO" id="GO:0005524">
    <property type="term" value="F:ATP binding"/>
    <property type="evidence" value="ECO:0007669"/>
    <property type="project" value="UniProtKB-UniRule"/>
</dbReference>
<dbReference type="GO" id="GO:0046933">
    <property type="term" value="F:proton-transporting ATP synthase activity, rotational mechanism"/>
    <property type="evidence" value="ECO:0007669"/>
    <property type="project" value="UniProtKB-UniRule"/>
</dbReference>
<dbReference type="GO" id="GO:0042777">
    <property type="term" value="P:proton motive force-driven plasma membrane ATP synthesis"/>
    <property type="evidence" value="ECO:0007669"/>
    <property type="project" value="UniProtKB-UniRule"/>
</dbReference>
<dbReference type="CDD" id="cd12151">
    <property type="entry name" value="F1-ATPase_gamma"/>
    <property type="match status" value="1"/>
</dbReference>
<dbReference type="FunFam" id="3.40.1380.10:FF:000006">
    <property type="entry name" value="ATP synthase gamma chain"/>
    <property type="match status" value="1"/>
</dbReference>
<dbReference type="Gene3D" id="3.40.1380.10">
    <property type="match status" value="1"/>
</dbReference>
<dbReference type="Gene3D" id="1.10.287.80">
    <property type="entry name" value="ATP synthase, gamma subunit, helix hairpin domain"/>
    <property type="match status" value="1"/>
</dbReference>
<dbReference type="HAMAP" id="MF_00815">
    <property type="entry name" value="ATP_synth_gamma_bact"/>
    <property type="match status" value="1"/>
</dbReference>
<dbReference type="InterPro" id="IPR035968">
    <property type="entry name" value="ATP_synth_F1_ATPase_gsu"/>
</dbReference>
<dbReference type="InterPro" id="IPR000131">
    <property type="entry name" value="ATP_synth_F1_gsu"/>
</dbReference>
<dbReference type="InterPro" id="IPR023632">
    <property type="entry name" value="ATP_synth_F1_gsu_CS"/>
</dbReference>
<dbReference type="NCBIfam" id="TIGR01146">
    <property type="entry name" value="ATPsyn_F1gamma"/>
    <property type="match status" value="1"/>
</dbReference>
<dbReference type="PANTHER" id="PTHR11693">
    <property type="entry name" value="ATP SYNTHASE GAMMA CHAIN"/>
    <property type="match status" value="1"/>
</dbReference>
<dbReference type="PANTHER" id="PTHR11693:SF22">
    <property type="entry name" value="ATP SYNTHASE SUBUNIT GAMMA, MITOCHONDRIAL"/>
    <property type="match status" value="1"/>
</dbReference>
<dbReference type="Pfam" id="PF00231">
    <property type="entry name" value="ATP-synt"/>
    <property type="match status" value="1"/>
</dbReference>
<dbReference type="PRINTS" id="PR00126">
    <property type="entry name" value="ATPASEGAMMA"/>
</dbReference>
<dbReference type="SUPFAM" id="SSF52943">
    <property type="entry name" value="ATP synthase (F1-ATPase), gamma subunit"/>
    <property type="match status" value="1"/>
</dbReference>
<dbReference type="PROSITE" id="PS00153">
    <property type="entry name" value="ATPASE_GAMMA"/>
    <property type="match status" value="1"/>
</dbReference>
<keyword id="KW-0066">ATP synthesis</keyword>
<keyword id="KW-0997">Cell inner membrane</keyword>
<keyword id="KW-1003">Cell membrane</keyword>
<keyword id="KW-0139">CF(1)</keyword>
<keyword id="KW-0375">Hydrogen ion transport</keyword>
<keyword id="KW-0406">Ion transport</keyword>
<keyword id="KW-0472">Membrane</keyword>
<keyword id="KW-1185">Reference proteome</keyword>
<keyword id="KW-0813">Transport</keyword>
<proteinExistence type="inferred from homology"/>
<name>ATPG_SYNFM</name>
<sequence length="292" mass="32975">MATLRDIKRKIDAVKKTSQITKAMNMVAAAKLRGAQQNMERFHPYAEKFNEVIERLAEGVEDAGQYVLLTPREEVKKIELVLVTADRGLCGSFNNNLIVMAERFLKAKQAEGCQVRLTAVGRKGGDYFRRRTFEVRKRMTGLLNKPSYEDAAVLGRELIEQFEIGECDEVYVIYSRFLSMVRQQATLMKLLPIAPAKKTEAEEKGRLEYLFEPSHEALLTDLLPNYVFIEILESLYQTAVGEHAARMAAMENATSNCKELVKTLTLTYNKARQAGITKELMDIVGGAEALKK</sequence>
<accession>A0LLF9</accession>
<protein>
    <recommendedName>
        <fullName evidence="1">ATP synthase gamma chain</fullName>
    </recommendedName>
    <alternativeName>
        <fullName evidence="1">ATP synthase F1 sector gamma subunit</fullName>
    </alternativeName>
    <alternativeName>
        <fullName evidence="1">F-ATPase gamma subunit</fullName>
    </alternativeName>
</protein>
<feature type="chain" id="PRO_1000053360" description="ATP synthase gamma chain">
    <location>
        <begin position="1"/>
        <end position="292"/>
    </location>
</feature>
<gene>
    <name evidence="1" type="primary">atpG</name>
    <name type="ordered locus">Sfum_2583</name>
</gene>
<comment type="function">
    <text evidence="1">Produces ATP from ADP in the presence of a proton gradient across the membrane. The gamma chain is believed to be important in regulating ATPase activity and the flow of protons through the CF(0) complex.</text>
</comment>
<comment type="subunit">
    <text evidence="1">F-type ATPases have 2 components, CF(1) - the catalytic core - and CF(0) - the membrane proton channel. CF(1) has five subunits: alpha(3), beta(3), gamma(1), delta(1), epsilon(1). CF(0) has three main subunits: a, b and c.</text>
</comment>
<comment type="subcellular location">
    <subcellularLocation>
        <location evidence="1">Cell inner membrane</location>
        <topology evidence="1">Peripheral membrane protein</topology>
    </subcellularLocation>
</comment>
<comment type="similarity">
    <text evidence="1">Belongs to the ATPase gamma chain family.</text>
</comment>
<evidence type="ECO:0000255" key="1">
    <source>
        <dbReference type="HAMAP-Rule" id="MF_00815"/>
    </source>
</evidence>
<reference key="1">
    <citation type="submission" date="2006-10" db="EMBL/GenBank/DDBJ databases">
        <title>Complete sequence of Syntrophobacter fumaroxidans MPOB.</title>
        <authorList>
            <consortium name="US DOE Joint Genome Institute"/>
            <person name="Copeland A."/>
            <person name="Lucas S."/>
            <person name="Lapidus A."/>
            <person name="Barry K."/>
            <person name="Detter J.C."/>
            <person name="Glavina del Rio T."/>
            <person name="Hammon N."/>
            <person name="Israni S."/>
            <person name="Pitluck S."/>
            <person name="Goltsman E.G."/>
            <person name="Martinez M."/>
            <person name="Schmutz J."/>
            <person name="Larimer F."/>
            <person name="Land M."/>
            <person name="Hauser L."/>
            <person name="Kyrpides N."/>
            <person name="Kim E."/>
            <person name="Boone D.R."/>
            <person name="Brockman F."/>
            <person name="Culley D."/>
            <person name="Ferry J."/>
            <person name="Gunsalus R."/>
            <person name="McInerney M.J."/>
            <person name="Morrison M."/>
            <person name="Plugge C."/>
            <person name="Rohlin L."/>
            <person name="Scholten J."/>
            <person name="Sieber J."/>
            <person name="Stams A.J.M."/>
            <person name="Worm P."/>
            <person name="Henstra A.M."/>
            <person name="Richardson P."/>
        </authorList>
    </citation>
    <scope>NUCLEOTIDE SEQUENCE [LARGE SCALE GENOMIC DNA]</scope>
    <source>
        <strain>DSM 10017 / MPOB</strain>
    </source>
</reference>
<organism>
    <name type="scientific">Syntrophobacter fumaroxidans (strain DSM 10017 / MPOB)</name>
    <dbReference type="NCBI Taxonomy" id="335543"/>
    <lineage>
        <taxon>Bacteria</taxon>
        <taxon>Pseudomonadati</taxon>
        <taxon>Thermodesulfobacteriota</taxon>
        <taxon>Syntrophobacteria</taxon>
        <taxon>Syntrophobacterales</taxon>
        <taxon>Syntrophobacteraceae</taxon>
        <taxon>Syntrophobacter</taxon>
    </lineage>
</organism>